<feature type="initiator methionine" description="Removed" evidence="1">
    <location>
        <position position="1"/>
    </location>
</feature>
<feature type="chain" id="PRO_0000268500" description="Bifunctional protein FolD">
    <location>
        <begin position="2"/>
        <end position="288"/>
    </location>
</feature>
<feature type="binding site" evidence="2">
    <location>
        <begin position="166"/>
        <end position="168"/>
    </location>
    <ligand>
        <name>NADP(+)</name>
        <dbReference type="ChEBI" id="CHEBI:58349"/>
    </ligand>
</feature>
<feature type="binding site" evidence="2">
    <location>
        <position position="232"/>
    </location>
    <ligand>
        <name>NADP(+)</name>
        <dbReference type="ChEBI" id="CHEBI:58349"/>
    </ligand>
</feature>
<protein>
    <recommendedName>
        <fullName evidence="2">Bifunctional protein FolD</fullName>
    </recommendedName>
    <domain>
        <recommendedName>
            <fullName evidence="2">Methylenetetrahydrofolate dehydrogenase</fullName>
            <ecNumber evidence="2">1.5.1.5</ecNumber>
        </recommendedName>
    </domain>
    <domain>
        <recommendedName>
            <fullName evidence="2">Methenyltetrahydrofolate cyclohydrolase</fullName>
            <ecNumber evidence="2">3.5.4.9</ecNumber>
        </recommendedName>
    </domain>
</protein>
<sequence>MAAKIIDGKTIAQQVRSEVAQKVQARIAAGLRAPGLAVVLVGSNPASQIYVASKRKACEEVGFVSRSYDLPETTSEAELLELIDALNADNTIDGILVQLPLPAGIDNVKVLERIHPDKDVDGFHPYNVGRLCQRAPRLRPCTPRGIVTLLERYNIDTFGLNAVVIGASNIVGRPMSMELLLAGCTTTVTHRFTKNLRHHVENADLLIVAVGKPGFIPGDWIKEGAIVIDVGINRLENGKVVGDVVFEDAAKRASYITPVPGGVGPMTVATLIENTLQACVEYHDPQGE</sequence>
<keyword id="KW-0028">Amino-acid biosynthesis</keyword>
<keyword id="KW-0368">Histidine biosynthesis</keyword>
<keyword id="KW-0378">Hydrolase</keyword>
<keyword id="KW-0486">Methionine biosynthesis</keyword>
<keyword id="KW-0511">Multifunctional enzyme</keyword>
<keyword id="KW-0521">NADP</keyword>
<keyword id="KW-0554">One-carbon metabolism</keyword>
<keyword id="KW-0560">Oxidoreductase</keyword>
<keyword id="KW-0658">Purine biosynthesis</keyword>
<keyword id="KW-1185">Reference proteome</keyword>
<reference key="1">
    <citation type="journal article" date="2005" name="Nucleic Acids Res.">
        <title>Genome dynamics and diversity of Shigella species, the etiologic agents of bacillary dysentery.</title>
        <authorList>
            <person name="Yang F."/>
            <person name="Yang J."/>
            <person name="Zhang X."/>
            <person name="Chen L."/>
            <person name="Jiang Y."/>
            <person name="Yan Y."/>
            <person name="Tang X."/>
            <person name="Wang J."/>
            <person name="Xiong Z."/>
            <person name="Dong J."/>
            <person name="Xue Y."/>
            <person name="Zhu Y."/>
            <person name="Xu X."/>
            <person name="Sun L."/>
            <person name="Chen S."/>
            <person name="Nie H."/>
            <person name="Peng J."/>
            <person name="Xu J."/>
            <person name="Wang Y."/>
            <person name="Yuan Z."/>
            <person name="Wen Y."/>
            <person name="Yao Z."/>
            <person name="Shen Y."/>
            <person name="Qiang B."/>
            <person name="Hou Y."/>
            <person name="Yu J."/>
            <person name="Jin Q."/>
        </authorList>
    </citation>
    <scope>NUCLEOTIDE SEQUENCE [LARGE SCALE GENOMIC DNA]</scope>
    <source>
        <strain>Ss046</strain>
    </source>
</reference>
<accession>Q3Z4P8</accession>
<evidence type="ECO:0000250" key="1"/>
<evidence type="ECO:0000255" key="2">
    <source>
        <dbReference type="HAMAP-Rule" id="MF_01576"/>
    </source>
</evidence>
<organism>
    <name type="scientific">Shigella sonnei (strain Ss046)</name>
    <dbReference type="NCBI Taxonomy" id="300269"/>
    <lineage>
        <taxon>Bacteria</taxon>
        <taxon>Pseudomonadati</taxon>
        <taxon>Pseudomonadota</taxon>
        <taxon>Gammaproteobacteria</taxon>
        <taxon>Enterobacterales</taxon>
        <taxon>Enterobacteriaceae</taxon>
        <taxon>Shigella</taxon>
    </lineage>
</organism>
<gene>
    <name evidence="2" type="primary">folD</name>
    <name type="ordered locus">SSON_0489</name>
</gene>
<dbReference type="EC" id="1.5.1.5" evidence="2"/>
<dbReference type="EC" id="3.5.4.9" evidence="2"/>
<dbReference type="EMBL" id="CP000038">
    <property type="protein sequence ID" value="AAZ87264.1"/>
    <property type="molecule type" value="Genomic_DNA"/>
</dbReference>
<dbReference type="RefSeq" id="WP_000729155.1">
    <property type="nucleotide sequence ID" value="NC_007384.1"/>
</dbReference>
<dbReference type="SMR" id="Q3Z4P8"/>
<dbReference type="GeneID" id="93776949"/>
<dbReference type="KEGG" id="ssn:SSON_0489"/>
<dbReference type="HOGENOM" id="CLU_034045_2_1_6"/>
<dbReference type="UniPathway" id="UPA00193"/>
<dbReference type="Proteomes" id="UP000002529">
    <property type="component" value="Chromosome"/>
</dbReference>
<dbReference type="GO" id="GO:0005829">
    <property type="term" value="C:cytosol"/>
    <property type="evidence" value="ECO:0007669"/>
    <property type="project" value="TreeGrafter"/>
</dbReference>
<dbReference type="GO" id="GO:0004477">
    <property type="term" value="F:methenyltetrahydrofolate cyclohydrolase activity"/>
    <property type="evidence" value="ECO:0007669"/>
    <property type="project" value="UniProtKB-UniRule"/>
</dbReference>
<dbReference type="GO" id="GO:0004488">
    <property type="term" value="F:methylenetetrahydrofolate dehydrogenase (NADP+) activity"/>
    <property type="evidence" value="ECO:0007669"/>
    <property type="project" value="UniProtKB-UniRule"/>
</dbReference>
<dbReference type="GO" id="GO:0000105">
    <property type="term" value="P:L-histidine biosynthetic process"/>
    <property type="evidence" value="ECO:0007669"/>
    <property type="project" value="UniProtKB-KW"/>
</dbReference>
<dbReference type="GO" id="GO:0009086">
    <property type="term" value="P:methionine biosynthetic process"/>
    <property type="evidence" value="ECO:0007669"/>
    <property type="project" value="UniProtKB-KW"/>
</dbReference>
<dbReference type="GO" id="GO:0006164">
    <property type="term" value="P:purine nucleotide biosynthetic process"/>
    <property type="evidence" value="ECO:0007669"/>
    <property type="project" value="UniProtKB-KW"/>
</dbReference>
<dbReference type="GO" id="GO:0035999">
    <property type="term" value="P:tetrahydrofolate interconversion"/>
    <property type="evidence" value="ECO:0007669"/>
    <property type="project" value="UniProtKB-UniRule"/>
</dbReference>
<dbReference type="CDD" id="cd01080">
    <property type="entry name" value="NAD_bind_m-THF_DH_Cyclohyd"/>
    <property type="match status" value="1"/>
</dbReference>
<dbReference type="FunFam" id="3.40.50.10860:FF:000001">
    <property type="entry name" value="Bifunctional protein FolD"/>
    <property type="match status" value="1"/>
</dbReference>
<dbReference type="FunFam" id="3.40.50.720:FF:000006">
    <property type="entry name" value="Bifunctional protein FolD"/>
    <property type="match status" value="1"/>
</dbReference>
<dbReference type="Gene3D" id="3.40.50.10860">
    <property type="entry name" value="Leucine Dehydrogenase, chain A, domain 1"/>
    <property type="match status" value="1"/>
</dbReference>
<dbReference type="Gene3D" id="3.40.50.720">
    <property type="entry name" value="NAD(P)-binding Rossmann-like Domain"/>
    <property type="match status" value="1"/>
</dbReference>
<dbReference type="HAMAP" id="MF_01576">
    <property type="entry name" value="THF_DHG_CYH"/>
    <property type="match status" value="1"/>
</dbReference>
<dbReference type="InterPro" id="IPR046346">
    <property type="entry name" value="Aminoacid_DH-like_N_sf"/>
</dbReference>
<dbReference type="InterPro" id="IPR036291">
    <property type="entry name" value="NAD(P)-bd_dom_sf"/>
</dbReference>
<dbReference type="InterPro" id="IPR000672">
    <property type="entry name" value="THF_DH/CycHdrlase"/>
</dbReference>
<dbReference type="InterPro" id="IPR020630">
    <property type="entry name" value="THF_DH/CycHdrlase_cat_dom"/>
</dbReference>
<dbReference type="InterPro" id="IPR020867">
    <property type="entry name" value="THF_DH/CycHdrlase_CS"/>
</dbReference>
<dbReference type="InterPro" id="IPR020631">
    <property type="entry name" value="THF_DH/CycHdrlase_NAD-bd_dom"/>
</dbReference>
<dbReference type="NCBIfam" id="NF008058">
    <property type="entry name" value="PRK10792.1"/>
    <property type="match status" value="1"/>
</dbReference>
<dbReference type="NCBIfam" id="NF010783">
    <property type="entry name" value="PRK14186.1"/>
    <property type="match status" value="1"/>
</dbReference>
<dbReference type="PANTHER" id="PTHR48099:SF5">
    <property type="entry name" value="C-1-TETRAHYDROFOLATE SYNTHASE, CYTOPLASMIC"/>
    <property type="match status" value="1"/>
</dbReference>
<dbReference type="PANTHER" id="PTHR48099">
    <property type="entry name" value="C-1-TETRAHYDROFOLATE SYNTHASE, CYTOPLASMIC-RELATED"/>
    <property type="match status" value="1"/>
</dbReference>
<dbReference type="Pfam" id="PF00763">
    <property type="entry name" value="THF_DHG_CYH"/>
    <property type="match status" value="1"/>
</dbReference>
<dbReference type="Pfam" id="PF02882">
    <property type="entry name" value="THF_DHG_CYH_C"/>
    <property type="match status" value="1"/>
</dbReference>
<dbReference type="PRINTS" id="PR00085">
    <property type="entry name" value="THFDHDRGNASE"/>
</dbReference>
<dbReference type="SUPFAM" id="SSF53223">
    <property type="entry name" value="Aminoacid dehydrogenase-like, N-terminal domain"/>
    <property type="match status" value="1"/>
</dbReference>
<dbReference type="SUPFAM" id="SSF51735">
    <property type="entry name" value="NAD(P)-binding Rossmann-fold domains"/>
    <property type="match status" value="1"/>
</dbReference>
<dbReference type="PROSITE" id="PS00766">
    <property type="entry name" value="THF_DHG_CYH_1"/>
    <property type="match status" value="1"/>
</dbReference>
<dbReference type="PROSITE" id="PS00767">
    <property type="entry name" value="THF_DHG_CYH_2"/>
    <property type="match status" value="1"/>
</dbReference>
<name>FOLD_SHISS</name>
<comment type="function">
    <text evidence="2">Catalyzes the oxidation of 5,10-methylenetetrahydrofolate to 5,10-methenyltetrahydrofolate and then the hydrolysis of 5,10-methenyltetrahydrofolate to 10-formyltetrahydrofolate.</text>
</comment>
<comment type="catalytic activity">
    <reaction evidence="2">
        <text>(6R)-5,10-methylene-5,6,7,8-tetrahydrofolate + NADP(+) = (6R)-5,10-methenyltetrahydrofolate + NADPH</text>
        <dbReference type="Rhea" id="RHEA:22812"/>
        <dbReference type="ChEBI" id="CHEBI:15636"/>
        <dbReference type="ChEBI" id="CHEBI:57455"/>
        <dbReference type="ChEBI" id="CHEBI:57783"/>
        <dbReference type="ChEBI" id="CHEBI:58349"/>
        <dbReference type="EC" id="1.5.1.5"/>
    </reaction>
</comment>
<comment type="catalytic activity">
    <reaction evidence="2">
        <text>(6R)-5,10-methenyltetrahydrofolate + H2O = (6R)-10-formyltetrahydrofolate + H(+)</text>
        <dbReference type="Rhea" id="RHEA:23700"/>
        <dbReference type="ChEBI" id="CHEBI:15377"/>
        <dbReference type="ChEBI" id="CHEBI:15378"/>
        <dbReference type="ChEBI" id="CHEBI:57455"/>
        <dbReference type="ChEBI" id="CHEBI:195366"/>
        <dbReference type="EC" id="3.5.4.9"/>
    </reaction>
</comment>
<comment type="pathway">
    <text evidence="2">One-carbon metabolism; tetrahydrofolate interconversion.</text>
</comment>
<comment type="subunit">
    <text evidence="2">Homodimer.</text>
</comment>
<comment type="similarity">
    <text evidence="2">Belongs to the tetrahydrofolate dehydrogenase/cyclohydrolase family.</text>
</comment>
<proteinExistence type="inferred from homology"/>